<reference key="1">
    <citation type="journal article" date="2005" name="Proc. Natl. Acad. Sci. U.S.A.">
        <title>Complete genome sequence of the probiotic lactic acid bacterium Lactobacillus acidophilus NCFM.</title>
        <authorList>
            <person name="Altermann E."/>
            <person name="Russell W.M."/>
            <person name="Azcarate-Peril M.A."/>
            <person name="Barrangou R."/>
            <person name="Buck B.L."/>
            <person name="McAuliffe O."/>
            <person name="Souther N."/>
            <person name="Dobson A."/>
            <person name="Duong T."/>
            <person name="Callanan M."/>
            <person name="Lick S."/>
            <person name="Hamrick A."/>
            <person name="Cano R."/>
            <person name="Klaenhammer T.R."/>
        </authorList>
    </citation>
    <scope>NUCLEOTIDE SEQUENCE [LARGE SCALE GENOMIC DNA]</scope>
    <source>
        <strain>ATCC 700396 / NCK56 / N2 / NCFM</strain>
    </source>
</reference>
<gene>
    <name evidence="1" type="primary">recA</name>
    <name type="ordered locus">LBA0666</name>
</gene>
<sequence>MAKDEKKAALDAALKKIEKNFGKGAVMRMGEKADTQISTVPTGSLALDAAIGVGGYPRGRIIEVYGPESSGKTTVALHAVAEVQKRGGTAAYIDAENAMDPAYAEALGVDIDSLILSQPNTGEEGLQIADTLISSGAIDIVVVDSVAALVPRAEIEGEMGDAHVGLQARLMSQALRKLSGTISKTKTIAIFINQIREKVGVMFGNPETTPGGRALKFYSTVRLEVRRAEQIKQSGDVLGNRVKIKVVKNKVAPPFKVAEVDIMYGKGISQSGELLDMAADKDIIDKAGSWYSYKSDRIGQGRENAKKYLEEHPDIYQKVQEQVRQAYGIDEKSIADRENPEKIKEKREETSEENKTDNSEKTK</sequence>
<feature type="chain" id="PRO_0000122729" description="Protein RecA">
    <location>
        <begin position="1"/>
        <end position="363"/>
    </location>
</feature>
<feature type="region of interest" description="Disordered" evidence="2">
    <location>
        <begin position="327"/>
        <end position="363"/>
    </location>
</feature>
<feature type="compositionally biased region" description="Basic and acidic residues" evidence="2">
    <location>
        <begin position="329"/>
        <end position="363"/>
    </location>
</feature>
<feature type="binding site" evidence="1">
    <location>
        <begin position="66"/>
        <end position="73"/>
    </location>
    <ligand>
        <name>ATP</name>
        <dbReference type="ChEBI" id="CHEBI:30616"/>
    </ligand>
</feature>
<name>RECA_LACAC</name>
<accession>Q5FL82</accession>
<comment type="function">
    <text evidence="1">Can catalyze the hydrolysis of ATP in the presence of single-stranded DNA, the ATP-dependent uptake of single-stranded DNA by duplex DNA, and the ATP-dependent hybridization of homologous single-stranded DNAs. It interacts with LexA causing its activation and leading to its autocatalytic cleavage.</text>
</comment>
<comment type="subcellular location">
    <subcellularLocation>
        <location evidence="1">Cytoplasm</location>
    </subcellularLocation>
</comment>
<comment type="similarity">
    <text evidence="1">Belongs to the RecA family.</text>
</comment>
<dbReference type="EMBL" id="CP000033">
    <property type="protein sequence ID" value="AAV42542.1"/>
    <property type="molecule type" value="Genomic_DNA"/>
</dbReference>
<dbReference type="RefSeq" id="WP_003546531.1">
    <property type="nucleotide sequence ID" value="NC_006814.3"/>
</dbReference>
<dbReference type="RefSeq" id="YP_193573.1">
    <property type="nucleotide sequence ID" value="NC_006814.3"/>
</dbReference>
<dbReference type="SMR" id="Q5FL82"/>
<dbReference type="STRING" id="272621.LBA0666"/>
<dbReference type="GeneID" id="93290206"/>
<dbReference type="KEGG" id="lac:LBA0666"/>
<dbReference type="PATRIC" id="fig|272621.13.peg.636"/>
<dbReference type="eggNOG" id="COG0468">
    <property type="taxonomic scope" value="Bacteria"/>
</dbReference>
<dbReference type="HOGENOM" id="CLU_040469_3_2_9"/>
<dbReference type="OrthoDB" id="9776733at2"/>
<dbReference type="BioCyc" id="LACI272621:G1G49-688-MONOMER"/>
<dbReference type="Proteomes" id="UP000006381">
    <property type="component" value="Chromosome"/>
</dbReference>
<dbReference type="GO" id="GO:0005829">
    <property type="term" value="C:cytosol"/>
    <property type="evidence" value="ECO:0007669"/>
    <property type="project" value="TreeGrafter"/>
</dbReference>
<dbReference type="GO" id="GO:0005524">
    <property type="term" value="F:ATP binding"/>
    <property type="evidence" value="ECO:0007669"/>
    <property type="project" value="UniProtKB-UniRule"/>
</dbReference>
<dbReference type="GO" id="GO:0016887">
    <property type="term" value="F:ATP hydrolysis activity"/>
    <property type="evidence" value="ECO:0007669"/>
    <property type="project" value="InterPro"/>
</dbReference>
<dbReference type="GO" id="GO:0140664">
    <property type="term" value="F:ATP-dependent DNA damage sensor activity"/>
    <property type="evidence" value="ECO:0007669"/>
    <property type="project" value="InterPro"/>
</dbReference>
<dbReference type="GO" id="GO:0003684">
    <property type="term" value="F:damaged DNA binding"/>
    <property type="evidence" value="ECO:0007669"/>
    <property type="project" value="UniProtKB-UniRule"/>
</dbReference>
<dbReference type="GO" id="GO:0003697">
    <property type="term" value="F:single-stranded DNA binding"/>
    <property type="evidence" value="ECO:0007669"/>
    <property type="project" value="UniProtKB-UniRule"/>
</dbReference>
<dbReference type="GO" id="GO:0006310">
    <property type="term" value="P:DNA recombination"/>
    <property type="evidence" value="ECO:0007669"/>
    <property type="project" value="UniProtKB-UniRule"/>
</dbReference>
<dbReference type="GO" id="GO:0006281">
    <property type="term" value="P:DNA repair"/>
    <property type="evidence" value="ECO:0007669"/>
    <property type="project" value="UniProtKB-UniRule"/>
</dbReference>
<dbReference type="GO" id="GO:0009432">
    <property type="term" value="P:SOS response"/>
    <property type="evidence" value="ECO:0007669"/>
    <property type="project" value="UniProtKB-UniRule"/>
</dbReference>
<dbReference type="CDD" id="cd00983">
    <property type="entry name" value="RecA"/>
    <property type="match status" value="1"/>
</dbReference>
<dbReference type="FunFam" id="3.40.50.300:FF:000087">
    <property type="entry name" value="Recombinase RecA"/>
    <property type="match status" value="1"/>
</dbReference>
<dbReference type="Gene3D" id="3.40.50.300">
    <property type="entry name" value="P-loop containing nucleotide triphosphate hydrolases"/>
    <property type="match status" value="1"/>
</dbReference>
<dbReference type="HAMAP" id="MF_00268">
    <property type="entry name" value="RecA"/>
    <property type="match status" value="1"/>
</dbReference>
<dbReference type="InterPro" id="IPR003593">
    <property type="entry name" value="AAA+_ATPase"/>
</dbReference>
<dbReference type="InterPro" id="IPR013765">
    <property type="entry name" value="DNA_recomb/repair_RecA"/>
</dbReference>
<dbReference type="InterPro" id="IPR020584">
    <property type="entry name" value="DNA_recomb/repair_RecA_CS"/>
</dbReference>
<dbReference type="InterPro" id="IPR027417">
    <property type="entry name" value="P-loop_NTPase"/>
</dbReference>
<dbReference type="InterPro" id="IPR049261">
    <property type="entry name" value="RecA-like_C"/>
</dbReference>
<dbReference type="InterPro" id="IPR049428">
    <property type="entry name" value="RecA-like_N"/>
</dbReference>
<dbReference type="InterPro" id="IPR020588">
    <property type="entry name" value="RecA_ATP-bd"/>
</dbReference>
<dbReference type="InterPro" id="IPR023400">
    <property type="entry name" value="RecA_C_sf"/>
</dbReference>
<dbReference type="InterPro" id="IPR020587">
    <property type="entry name" value="RecA_monomer-monomer_interface"/>
</dbReference>
<dbReference type="NCBIfam" id="TIGR02012">
    <property type="entry name" value="tigrfam_recA"/>
    <property type="match status" value="1"/>
</dbReference>
<dbReference type="PANTHER" id="PTHR45900:SF1">
    <property type="entry name" value="MITOCHONDRIAL DNA REPAIR PROTEIN RECA HOMOLOG-RELATED"/>
    <property type="match status" value="1"/>
</dbReference>
<dbReference type="PANTHER" id="PTHR45900">
    <property type="entry name" value="RECA"/>
    <property type="match status" value="1"/>
</dbReference>
<dbReference type="Pfam" id="PF00154">
    <property type="entry name" value="RecA"/>
    <property type="match status" value="1"/>
</dbReference>
<dbReference type="Pfam" id="PF21096">
    <property type="entry name" value="RecA_C"/>
    <property type="match status" value="1"/>
</dbReference>
<dbReference type="PRINTS" id="PR00142">
    <property type="entry name" value="RECA"/>
</dbReference>
<dbReference type="SMART" id="SM00382">
    <property type="entry name" value="AAA"/>
    <property type="match status" value="1"/>
</dbReference>
<dbReference type="SUPFAM" id="SSF52540">
    <property type="entry name" value="P-loop containing nucleoside triphosphate hydrolases"/>
    <property type="match status" value="1"/>
</dbReference>
<dbReference type="SUPFAM" id="SSF54752">
    <property type="entry name" value="RecA protein, C-terminal domain"/>
    <property type="match status" value="1"/>
</dbReference>
<dbReference type="PROSITE" id="PS00321">
    <property type="entry name" value="RECA_1"/>
    <property type="match status" value="1"/>
</dbReference>
<dbReference type="PROSITE" id="PS50162">
    <property type="entry name" value="RECA_2"/>
    <property type="match status" value="1"/>
</dbReference>
<dbReference type="PROSITE" id="PS50163">
    <property type="entry name" value="RECA_3"/>
    <property type="match status" value="1"/>
</dbReference>
<proteinExistence type="inferred from homology"/>
<evidence type="ECO:0000255" key="1">
    <source>
        <dbReference type="HAMAP-Rule" id="MF_00268"/>
    </source>
</evidence>
<evidence type="ECO:0000256" key="2">
    <source>
        <dbReference type="SAM" id="MobiDB-lite"/>
    </source>
</evidence>
<organism>
    <name type="scientific">Lactobacillus acidophilus (strain ATCC 700396 / NCK56 / N2 / NCFM)</name>
    <dbReference type="NCBI Taxonomy" id="272621"/>
    <lineage>
        <taxon>Bacteria</taxon>
        <taxon>Bacillati</taxon>
        <taxon>Bacillota</taxon>
        <taxon>Bacilli</taxon>
        <taxon>Lactobacillales</taxon>
        <taxon>Lactobacillaceae</taxon>
        <taxon>Lactobacillus</taxon>
    </lineage>
</organism>
<protein>
    <recommendedName>
        <fullName evidence="1">Protein RecA</fullName>
    </recommendedName>
    <alternativeName>
        <fullName evidence="1">Recombinase A</fullName>
    </alternativeName>
</protein>
<keyword id="KW-0067">ATP-binding</keyword>
<keyword id="KW-0963">Cytoplasm</keyword>
<keyword id="KW-0227">DNA damage</keyword>
<keyword id="KW-0233">DNA recombination</keyword>
<keyword id="KW-0234">DNA repair</keyword>
<keyword id="KW-0238">DNA-binding</keyword>
<keyword id="KW-0547">Nucleotide-binding</keyword>
<keyword id="KW-1185">Reference proteome</keyword>
<keyword id="KW-0742">SOS response</keyword>